<accession>P74565</accession>
<accession>Q55351</accession>
<evidence type="ECO:0000255" key="1">
    <source>
        <dbReference type="HAMAP-Rule" id="MF_00963"/>
    </source>
</evidence>
<evidence type="ECO:0007829" key="2">
    <source>
        <dbReference type="PDB" id="8GZG"/>
    </source>
</evidence>
<evidence type="ECO:0007829" key="3">
    <source>
        <dbReference type="PDB" id="8GZH"/>
    </source>
</evidence>
<proteinExistence type="evidence at protein level"/>
<protein>
    <recommendedName>
        <fullName evidence="1">RNA polymerase sigma factor SigA</fullName>
    </recommendedName>
</protein>
<feature type="chain" id="PRO_0000093928" description="RNA polymerase sigma factor SigA">
    <location>
        <begin position="1"/>
        <end position="425"/>
    </location>
</feature>
<feature type="DNA-binding region" description="H-T-H motif" evidence="1">
    <location>
        <begin position="386"/>
        <end position="405"/>
    </location>
</feature>
<feature type="region of interest" description="Sigma-70 factor domain-2" evidence="1">
    <location>
        <begin position="193"/>
        <end position="263"/>
    </location>
</feature>
<feature type="region of interest" description="Sigma-70 factor domain-3" evidence="1">
    <location>
        <begin position="272"/>
        <end position="347"/>
    </location>
</feature>
<feature type="region of interest" description="Sigma-70 factor domain-4" evidence="1">
    <location>
        <begin position="360"/>
        <end position="413"/>
    </location>
</feature>
<feature type="short sequence motif" description="Interaction with polymerase core subunit RpoC">
    <location>
        <begin position="217"/>
        <end position="220"/>
    </location>
</feature>
<feature type="helix" evidence="3">
    <location>
        <begin position="72"/>
        <end position="81"/>
    </location>
</feature>
<feature type="helix" evidence="3">
    <location>
        <begin position="88"/>
        <end position="115"/>
    </location>
</feature>
<feature type="helix" evidence="3">
    <location>
        <begin position="174"/>
        <end position="195"/>
    </location>
</feature>
<feature type="helix" evidence="3">
    <location>
        <begin position="198"/>
        <end position="205"/>
    </location>
</feature>
<feature type="strand" evidence="3">
    <location>
        <begin position="211"/>
        <end position="213"/>
    </location>
</feature>
<feature type="helix" evidence="3">
    <location>
        <begin position="215"/>
        <end position="230"/>
    </location>
</feature>
<feature type="helix" evidence="3">
    <location>
        <begin position="235"/>
        <end position="237"/>
    </location>
</feature>
<feature type="helix" evidence="3">
    <location>
        <begin position="241"/>
        <end position="259"/>
    </location>
</feature>
<feature type="helix" evidence="3">
    <location>
        <begin position="268"/>
        <end position="287"/>
    </location>
</feature>
<feature type="helix" evidence="3">
    <location>
        <begin position="294"/>
        <end position="301"/>
    </location>
</feature>
<feature type="helix" evidence="3">
    <location>
        <begin position="305"/>
        <end position="314"/>
    </location>
</feature>
<feature type="strand" evidence="3">
    <location>
        <begin position="325"/>
        <end position="330"/>
    </location>
</feature>
<feature type="helix" evidence="3">
    <location>
        <begin position="333"/>
        <end position="336"/>
    </location>
</feature>
<feature type="helix" evidence="3">
    <location>
        <begin position="344"/>
        <end position="361"/>
    </location>
</feature>
<feature type="helix" evidence="3">
    <location>
        <begin position="366"/>
        <end position="376"/>
    </location>
</feature>
<feature type="strand" evidence="3">
    <location>
        <begin position="378"/>
        <end position="381"/>
    </location>
</feature>
<feature type="helix" evidence="3">
    <location>
        <begin position="386"/>
        <end position="392"/>
    </location>
</feature>
<feature type="strand" evidence="3">
    <location>
        <begin position="393"/>
        <end position="395"/>
    </location>
</feature>
<feature type="helix" evidence="3">
    <location>
        <begin position="397"/>
        <end position="411"/>
    </location>
</feature>
<feature type="strand" evidence="2">
    <location>
        <begin position="413"/>
        <end position="416"/>
    </location>
</feature>
<feature type="helix" evidence="3">
    <location>
        <begin position="420"/>
        <end position="423"/>
    </location>
</feature>
<sequence length="425" mass="49936">MTQTKEPLTKAESAELEQEIELSQYINTDDIDDDDIDVEDLEQEVAATEGKEKKVRKIRKDAVKKKPYTEDSIRIYLQEIGRIRLLRAEEEIELARQIADLLELELIRDNLTLQLERQPSELEWGKQVWKLETAKQRLVGDKKKEPKKKDIDSYLANPDNELSLENEWSQQPNKNFAAFRRRLFLDRRAKDKMVQSNLRLVVSIAKKYMNRGLSFQDLIQEGSLGLIRAAEKFDHEKGYKFSTYATWWIRQAITRAIADQSRTIRLPVHLYETISRIKKTTKLLSQEMRRKPTEEEIAEKMEMTIEKLRFIAKSAQLPISLETPIGKEEDSRLGDFIEADGETPEDEVSKNLLREDLENVLDTLSPRERDVLRLRYGLDDGRMKTLEEIGQIFNVTRERIRQIEAKALRKLRHPNRNSILKEYIR</sequence>
<keyword id="KW-0002">3D-structure</keyword>
<keyword id="KW-0963">Cytoplasm</keyword>
<keyword id="KW-0238">DNA-binding</keyword>
<keyword id="KW-1185">Reference proteome</keyword>
<keyword id="KW-0731">Sigma factor</keyword>
<keyword id="KW-0804">Transcription</keyword>
<keyword id="KW-0805">Transcription regulation</keyword>
<name>SIGA_SYNY3</name>
<gene>
    <name evidence="1" type="primary">sigA</name>
    <name type="synonym">rpoD</name>
    <name type="synonym">rpoD1</name>
    <name type="ordered locus">slr0653</name>
</gene>
<comment type="function">
    <text evidence="1">Sigma factors are initiation factors that promote the attachment of RNA polymerase to specific initiation sites and are then released. This sigma factor is the primary sigma factor during exponential growth.</text>
</comment>
<comment type="subunit">
    <text evidence="1">Interacts transiently with the RNA polymerase catalytic core.</text>
</comment>
<comment type="subcellular location">
    <subcellularLocation>
        <location evidence="1">Cytoplasm</location>
    </subcellularLocation>
</comment>
<comment type="similarity">
    <text evidence="1">Belongs to the sigma-70 factor family. RpoD/SigA subfamily.</text>
</comment>
<dbReference type="EMBL" id="BA000022">
    <property type="protein sequence ID" value="BAA18672.1"/>
    <property type="molecule type" value="Genomic_DNA"/>
</dbReference>
<dbReference type="EMBL" id="D86213">
    <property type="protein sequence ID" value="BAA13043.1"/>
    <property type="molecule type" value="Genomic_DNA"/>
</dbReference>
<dbReference type="PIR" id="S76760">
    <property type="entry name" value="S76760"/>
</dbReference>
<dbReference type="PDB" id="8GZG">
    <property type="method" value="EM"/>
    <property type="resolution" value="3.13 A"/>
    <property type="chains" value="F=1-425"/>
</dbReference>
<dbReference type="PDB" id="8GZH">
    <property type="method" value="EM"/>
    <property type="resolution" value="2.96 A"/>
    <property type="chains" value="F=1-425"/>
</dbReference>
<dbReference type="PDBsum" id="8GZG"/>
<dbReference type="PDBsum" id="8GZH"/>
<dbReference type="EMDB" id="EMD-34397"/>
<dbReference type="EMDB" id="EMD-34398"/>
<dbReference type="SMR" id="P74565"/>
<dbReference type="FunCoup" id="P74565">
    <property type="interactions" value="481"/>
</dbReference>
<dbReference type="IntAct" id="P74565">
    <property type="interactions" value="42"/>
</dbReference>
<dbReference type="STRING" id="1148.gene:10500438"/>
<dbReference type="PaxDb" id="1148-1653761"/>
<dbReference type="EnsemblBacteria" id="BAA18672">
    <property type="protein sequence ID" value="BAA18672"/>
    <property type="gene ID" value="BAA18672"/>
</dbReference>
<dbReference type="KEGG" id="syn:slr0653"/>
<dbReference type="eggNOG" id="COG0568">
    <property type="taxonomic scope" value="Bacteria"/>
</dbReference>
<dbReference type="InParanoid" id="P74565"/>
<dbReference type="PhylomeDB" id="P74565"/>
<dbReference type="Proteomes" id="UP000001425">
    <property type="component" value="Chromosome"/>
</dbReference>
<dbReference type="GO" id="GO:0005737">
    <property type="term" value="C:cytoplasm"/>
    <property type="evidence" value="ECO:0007669"/>
    <property type="project" value="UniProtKB-SubCell"/>
</dbReference>
<dbReference type="GO" id="GO:0003677">
    <property type="term" value="F:DNA binding"/>
    <property type="evidence" value="ECO:0007669"/>
    <property type="project" value="UniProtKB-UniRule"/>
</dbReference>
<dbReference type="GO" id="GO:0016987">
    <property type="term" value="F:sigma factor activity"/>
    <property type="evidence" value="ECO:0007669"/>
    <property type="project" value="UniProtKB-UniRule"/>
</dbReference>
<dbReference type="GO" id="GO:0006352">
    <property type="term" value="P:DNA-templated transcription initiation"/>
    <property type="evidence" value="ECO:0007669"/>
    <property type="project" value="UniProtKB-UniRule"/>
</dbReference>
<dbReference type="CDD" id="cd06171">
    <property type="entry name" value="Sigma70_r4"/>
    <property type="match status" value="1"/>
</dbReference>
<dbReference type="FunFam" id="1.10.601.10:FF:000001">
    <property type="entry name" value="RNA polymerase sigma factor SigA"/>
    <property type="match status" value="1"/>
</dbReference>
<dbReference type="Gene3D" id="1.20.120.1810">
    <property type="match status" value="1"/>
</dbReference>
<dbReference type="Gene3D" id="1.10.10.10">
    <property type="entry name" value="Winged helix-like DNA-binding domain superfamily/Winged helix DNA-binding domain"/>
    <property type="match status" value="2"/>
</dbReference>
<dbReference type="HAMAP" id="MF_00963">
    <property type="entry name" value="Sigma70_RpoD_SigA"/>
    <property type="match status" value="1"/>
</dbReference>
<dbReference type="InterPro" id="IPR014284">
    <property type="entry name" value="RNA_pol_sigma-70_dom"/>
</dbReference>
<dbReference type="InterPro" id="IPR000943">
    <property type="entry name" value="RNA_pol_sigma70"/>
</dbReference>
<dbReference type="InterPro" id="IPR009042">
    <property type="entry name" value="RNA_pol_sigma70_r1_2"/>
</dbReference>
<dbReference type="InterPro" id="IPR007627">
    <property type="entry name" value="RNA_pol_sigma70_r2"/>
</dbReference>
<dbReference type="InterPro" id="IPR007624">
    <property type="entry name" value="RNA_pol_sigma70_r3"/>
</dbReference>
<dbReference type="InterPro" id="IPR007630">
    <property type="entry name" value="RNA_pol_sigma70_r4"/>
</dbReference>
<dbReference type="InterPro" id="IPR013325">
    <property type="entry name" value="RNA_pol_sigma_r2"/>
</dbReference>
<dbReference type="InterPro" id="IPR013324">
    <property type="entry name" value="RNA_pol_sigma_r3/r4-like"/>
</dbReference>
<dbReference type="InterPro" id="IPR017848">
    <property type="entry name" value="RNA_pol_sigma_RpoD/SigA_cyanob"/>
</dbReference>
<dbReference type="InterPro" id="IPR012760">
    <property type="entry name" value="RNA_pol_sigma_RpoD_C"/>
</dbReference>
<dbReference type="InterPro" id="IPR050239">
    <property type="entry name" value="Sigma-70_RNA_pol_init_factors"/>
</dbReference>
<dbReference type="InterPro" id="IPR028630">
    <property type="entry name" value="Sigma70_RpoD"/>
</dbReference>
<dbReference type="InterPro" id="IPR036388">
    <property type="entry name" value="WH-like_DNA-bd_sf"/>
</dbReference>
<dbReference type="NCBIfam" id="NF005643">
    <property type="entry name" value="PRK07406.1"/>
    <property type="match status" value="1"/>
</dbReference>
<dbReference type="NCBIfam" id="TIGR02393">
    <property type="entry name" value="RpoD_Cterm"/>
    <property type="match status" value="1"/>
</dbReference>
<dbReference type="NCBIfam" id="TIGR02997">
    <property type="entry name" value="Sig70-cyanoRpoD"/>
    <property type="match status" value="1"/>
</dbReference>
<dbReference type="NCBIfam" id="TIGR02937">
    <property type="entry name" value="sigma70-ECF"/>
    <property type="match status" value="1"/>
</dbReference>
<dbReference type="PANTHER" id="PTHR30603">
    <property type="entry name" value="RNA POLYMERASE SIGMA FACTOR RPO"/>
    <property type="match status" value="1"/>
</dbReference>
<dbReference type="PANTHER" id="PTHR30603:SF62">
    <property type="entry name" value="RNA POLYMERASE SIGMA FACTOR SIGA"/>
    <property type="match status" value="1"/>
</dbReference>
<dbReference type="Pfam" id="PF00140">
    <property type="entry name" value="Sigma70_r1_2"/>
    <property type="match status" value="1"/>
</dbReference>
<dbReference type="Pfam" id="PF04542">
    <property type="entry name" value="Sigma70_r2"/>
    <property type="match status" value="1"/>
</dbReference>
<dbReference type="Pfam" id="PF04539">
    <property type="entry name" value="Sigma70_r3"/>
    <property type="match status" value="1"/>
</dbReference>
<dbReference type="Pfam" id="PF04545">
    <property type="entry name" value="Sigma70_r4"/>
    <property type="match status" value="1"/>
</dbReference>
<dbReference type="PRINTS" id="PR00046">
    <property type="entry name" value="SIGMA70FCT"/>
</dbReference>
<dbReference type="SUPFAM" id="SSF88946">
    <property type="entry name" value="Sigma2 domain of RNA polymerase sigma factors"/>
    <property type="match status" value="1"/>
</dbReference>
<dbReference type="SUPFAM" id="SSF88659">
    <property type="entry name" value="Sigma3 and sigma4 domains of RNA polymerase sigma factors"/>
    <property type="match status" value="2"/>
</dbReference>
<dbReference type="PROSITE" id="PS00715">
    <property type="entry name" value="SIGMA70_1"/>
    <property type="match status" value="1"/>
</dbReference>
<dbReference type="PROSITE" id="PS00716">
    <property type="entry name" value="SIGMA70_2"/>
    <property type="match status" value="1"/>
</dbReference>
<reference key="1">
    <citation type="journal article" date="1996" name="DNA Res.">
        <title>Sequence analysis of the genome of the unicellular cyanobacterium Synechocystis sp. strain PCC6803. II. Sequence determination of the entire genome and assignment of potential protein-coding regions.</title>
        <authorList>
            <person name="Kaneko T."/>
            <person name="Sato S."/>
            <person name="Kotani H."/>
            <person name="Tanaka A."/>
            <person name="Asamizu E."/>
            <person name="Nakamura Y."/>
            <person name="Miyajima N."/>
            <person name="Hirosawa M."/>
            <person name="Sugiura M."/>
            <person name="Sasamoto S."/>
            <person name="Kimura T."/>
            <person name="Hosouchi T."/>
            <person name="Matsuno A."/>
            <person name="Muraki A."/>
            <person name="Nakazaki N."/>
            <person name="Naruo K."/>
            <person name="Okumura S."/>
            <person name="Shimpo S."/>
            <person name="Takeuchi C."/>
            <person name="Wada T."/>
            <person name="Watanabe A."/>
            <person name="Yamada M."/>
            <person name="Yasuda M."/>
            <person name="Tabata S."/>
        </authorList>
    </citation>
    <scope>NUCLEOTIDE SEQUENCE [LARGE SCALE GENOMIC DNA]</scope>
    <source>
        <strain>ATCC 27184 / PCC 6803 / Kazusa</strain>
    </source>
</reference>
<reference key="2">
    <citation type="journal article" date="1996" name="J. Gen. Appl. Microbiol.">
        <title>A new set of PCR primers for specific detection of the gene encoding the principal sigma factor in cyanobacteria.</title>
        <authorList>
            <person name="Asayama M."/>
            <person name="Yamada A."/>
            <person name="Tanaka K."/>
            <person name="Takahashi H."/>
            <person name="Shirai M."/>
        </authorList>
    </citation>
    <scope>NUCLEOTIDE SEQUENCE [GENOMIC DNA] OF 211-396</scope>
    <source>
        <strain>559</strain>
    </source>
</reference>
<organism>
    <name type="scientific">Synechocystis sp. (strain ATCC 27184 / PCC 6803 / Kazusa)</name>
    <dbReference type="NCBI Taxonomy" id="1111708"/>
    <lineage>
        <taxon>Bacteria</taxon>
        <taxon>Bacillati</taxon>
        <taxon>Cyanobacteriota</taxon>
        <taxon>Cyanophyceae</taxon>
        <taxon>Synechococcales</taxon>
        <taxon>Merismopediaceae</taxon>
        <taxon>Synechocystis</taxon>
    </lineage>
</organism>